<protein>
    <recommendedName>
        <fullName evidence="1">Xylose import ATP-binding protein XylG</fullName>
        <ecNumber evidence="1">7.5.2.10</ecNumber>
    </recommendedName>
</protein>
<keyword id="KW-0067">ATP-binding</keyword>
<keyword id="KW-1003">Cell membrane</keyword>
<keyword id="KW-0472">Membrane</keyword>
<keyword id="KW-0547">Nucleotide-binding</keyword>
<keyword id="KW-1185">Reference proteome</keyword>
<keyword id="KW-0677">Repeat</keyword>
<keyword id="KW-0762">Sugar transport</keyword>
<keyword id="KW-1278">Translocase</keyword>
<keyword id="KW-0813">Transport</keyword>
<organism>
    <name type="scientific">Geobacillus kaustophilus (strain HTA426)</name>
    <dbReference type="NCBI Taxonomy" id="235909"/>
    <lineage>
        <taxon>Bacteria</taxon>
        <taxon>Bacillati</taxon>
        <taxon>Bacillota</taxon>
        <taxon>Bacilli</taxon>
        <taxon>Bacillales</taxon>
        <taxon>Anoxybacillaceae</taxon>
        <taxon>Geobacillus</taxon>
        <taxon>Geobacillus thermoleovorans group</taxon>
    </lineage>
</organism>
<proteinExistence type="inferred from homology"/>
<reference key="1">
    <citation type="journal article" date="2004" name="Nucleic Acids Res.">
        <title>Thermoadaptation trait revealed by the genome sequence of thermophilic Geobacillus kaustophilus.</title>
        <authorList>
            <person name="Takami H."/>
            <person name="Takaki Y."/>
            <person name="Chee G.-J."/>
            <person name="Nishi S."/>
            <person name="Shimamura S."/>
            <person name="Suzuki H."/>
            <person name="Matsui S."/>
            <person name="Uchiyama I."/>
        </authorList>
    </citation>
    <scope>NUCLEOTIDE SEQUENCE [LARGE SCALE GENOMIC DNA]</scope>
    <source>
        <strain>HTA426</strain>
    </source>
</reference>
<name>XYLG_GEOKA</name>
<dbReference type="EC" id="7.5.2.10" evidence="1"/>
<dbReference type="EMBL" id="BA000043">
    <property type="protein sequence ID" value="BAD76165.1"/>
    <property type="molecule type" value="Genomic_DNA"/>
</dbReference>
<dbReference type="RefSeq" id="WP_011231370.1">
    <property type="nucleotide sequence ID" value="NC_006510.1"/>
</dbReference>
<dbReference type="SMR" id="Q5KYS1"/>
<dbReference type="STRING" id="235909.GK1880"/>
<dbReference type="KEGG" id="gka:GK1880"/>
<dbReference type="PATRIC" id="fig|235909.7.peg.2017"/>
<dbReference type="eggNOG" id="COG1129">
    <property type="taxonomic scope" value="Bacteria"/>
</dbReference>
<dbReference type="HOGENOM" id="CLU_000604_92_3_9"/>
<dbReference type="Proteomes" id="UP000001172">
    <property type="component" value="Chromosome"/>
</dbReference>
<dbReference type="GO" id="GO:0005886">
    <property type="term" value="C:plasma membrane"/>
    <property type="evidence" value="ECO:0007669"/>
    <property type="project" value="UniProtKB-SubCell"/>
</dbReference>
<dbReference type="GO" id="GO:0015614">
    <property type="term" value="F:ABC-type D-xylose transporter activity"/>
    <property type="evidence" value="ECO:0007669"/>
    <property type="project" value="UniProtKB-EC"/>
</dbReference>
<dbReference type="GO" id="GO:0005524">
    <property type="term" value="F:ATP binding"/>
    <property type="evidence" value="ECO:0007669"/>
    <property type="project" value="UniProtKB-KW"/>
</dbReference>
<dbReference type="GO" id="GO:0016887">
    <property type="term" value="F:ATP hydrolysis activity"/>
    <property type="evidence" value="ECO:0007669"/>
    <property type="project" value="InterPro"/>
</dbReference>
<dbReference type="CDD" id="cd03216">
    <property type="entry name" value="ABC_Carb_Monos_I"/>
    <property type="match status" value="1"/>
</dbReference>
<dbReference type="CDD" id="cd03215">
    <property type="entry name" value="ABC_Carb_Monos_II"/>
    <property type="match status" value="1"/>
</dbReference>
<dbReference type="FunFam" id="3.40.50.300:FF:000126">
    <property type="entry name" value="Galactose/methyl galactoside import ATP-binding protein MglA"/>
    <property type="match status" value="1"/>
</dbReference>
<dbReference type="FunFam" id="3.40.50.300:FF:000127">
    <property type="entry name" value="Ribose import ATP-binding protein RbsA"/>
    <property type="match status" value="1"/>
</dbReference>
<dbReference type="Gene3D" id="3.40.50.300">
    <property type="entry name" value="P-loop containing nucleotide triphosphate hydrolases"/>
    <property type="match status" value="2"/>
</dbReference>
<dbReference type="InterPro" id="IPR003593">
    <property type="entry name" value="AAA+_ATPase"/>
</dbReference>
<dbReference type="InterPro" id="IPR050107">
    <property type="entry name" value="ABC_carbohydrate_import_ATPase"/>
</dbReference>
<dbReference type="InterPro" id="IPR003439">
    <property type="entry name" value="ABC_transporter-like_ATP-bd"/>
</dbReference>
<dbReference type="InterPro" id="IPR017871">
    <property type="entry name" value="ABC_transporter-like_CS"/>
</dbReference>
<dbReference type="InterPro" id="IPR027417">
    <property type="entry name" value="P-loop_NTPase"/>
</dbReference>
<dbReference type="NCBIfam" id="NF010069">
    <property type="entry name" value="PRK13549.1"/>
    <property type="match status" value="1"/>
</dbReference>
<dbReference type="PANTHER" id="PTHR43790">
    <property type="entry name" value="CARBOHYDRATE TRANSPORT ATP-BINDING PROTEIN MG119-RELATED"/>
    <property type="match status" value="1"/>
</dbReference>
<dbReference type="PANTHER" id="PTHR43790:SF1">
    <property type="entry name" value="XYLOSE IMPORT ATP-BINDING PROTEIN XYLG"/>
    <property type="match status" value="1"/>
</dbReference>
<dbReference type="Pfam" id="PF00005">
    <property type="entry name" value="ABC_tran"/>
    <property type="match status" value="2"/>
</dbReference>
<dbReference type="SMART" id="SM00382">
    <property type="entry name" value="AAA"/>
    <property type="match status" value="2"/>
</dbReference>
<dbReference type="SUPFAM" id="SSF52540">
    <property type="entry name" value="P-loop containing nucleoside triphosphate hydrolases"/>
    <property type="match status" value="2"/>
</dbReference>
<dbReference type="PROSITE" id="PS00211">
    <property type="entry name" value="ABC_TRANSPORTER_1"/>
    <property type="match status" value="1"/>
</dbReference>
<dbReference type="PROSITE" id="PS50893">
    <property type="entry name" value="ABC_TRANSPORTER_2"/>
    <property type="match status" value="2"/>
</dbReference>
<dbReference type="PROSITE" id="PS51280">
    <property type="entry name" value="XYLG"/>
    <property type="match status" value="1"/>
</dbReference>
<accession>Q5KYS1</accession>
<comment type="function">
    <text evidence="1">Part of the ABC transporter complex XylFGH involved in xylose import. Responsible for energy coupling to the transport system.</text>
</comment>
<comment type="catalytic activity">
    <reaction evidence="1">
        <text>D-xylose(out) + ATP + H2O = D-xylose(in) + ADP + phosphate + H(+)</text>
        <dbReference type="Rhea" id="RHEA:29899"/>
        <dbReference type="ChEBI" id="CHEBI:15377"/>
        <dbReference type="ChEBI" id="CHEBI:15378"/>
        <dbReference type="ChEBI" id="CHEBI:30616"/>
        <dbReference type="ChEBI" id="CHEBI:43474"/>
        <dbReference type="ChEBI" id="CHEBI:53455"/>
        <dbReference type="ChEBI" id="CHEBI:456216"/>
        <dbReference type="EC" id="7.5.2.10"/>
    </reaction>
</comment>
<comment type="subunit">
    <text evidence="1">The complex is composed of two ATP-binding proteins (XylG), two transmembrane proteins (XylH) and a solute-binding protein (XylF).</text>
</comment>
<comment type="subcellular location">
    <subcellularLocation>
        <location evidence="1">Cell membrane</location>
        <topology evidence="1">Peripheral membrane protein</topology>
    </subcellularLocation>
</comment>
<comment type="similarity">
    <text evidence="1">Belongs to the ABC transporter superfamily. Xylose importer (TC 3.A.1.2.4) family.</text>
</comment>
<feature type="chain" id="PRO_0000271505" description="Xylose import ATP-binding protein XylG">
    <location>
        <begin position="1"/>
        <end position="504"/>
    </location>
</feature>
<feature type="domain" description="ABC transporter 1" evidence="1">
    <location>
        <begin position="6"/>
        <end position="243"/>
    </location>
</feature>
<feature type="domain" description="ABC transporter 2" evidence="1">
    <location>
        <begin position="260"/>
        <end position="504"/>
    </location>
</feature>
<feature type="binding site" evidence="1">
    <location>
        <begin position="38"/>
        <end position="45"/>
    </location>
    <ligand>
        <name>ATP</name>
        <dbReference type="ChEBI" id="CHEBI:30616"/>
    </ligand>
</feature>
<evidence type="ECO:0000255" key="1">
    <source>
        <dbReference type="HAMAP-Rule" id="MF_01722"/>
    </source>
</evidence>
<sequence length="504" mass="56302">MQSYVLEMKGITKEFPGVRALDNVTFSVRKGEIHALCGENGAGKSTLMKVLSGVYPYGSYDGKIYIEGKEVRFRNIKESQEAGIAIIYQELAVVEEMTVAENLFLGHELMRGKYIDWNRLYSEAQKWLQKIGLDIDPETKVRNLTVGKQQLIEIAKALSKNAKIIILDEPTAALTDSDVATLKNILCDLRSQGVTCIYISHRLNEVMELADTVTVLRDGQTISTDRIELLTEEQIIAKMVGRELNELYPYEPRNVGKEILKVDHYSVIDEQTGREVIHDVSFSLKAGEILGISGLMGSGRTELFTSLFGAYHGKKKGTVWIDGKQVDIRRPAEAIQYGMAYVSEDRKKYGLVLEMDIIKNSTLVALKKVTKWNVIDHALEVKQAEEITKRMKLKAPTLEAKVSQLSGGNQQKVVLSKWLLNSPKILILDEPTRGIDVGAKYEIYKIINELASQGVGIVLISSELPEVMGMSDRILVMSEGRITGEFQRHEATQEKIMTCATGGK</sequence>
<gene>
    <name evidence="1" type="primary">xylG</name>
    <name type="ordered locus">GK1880</name>
</gene>